<evidence type="ECO:0000255" key="1">
    <source>
        <dbReference type="HAMAP-Rule" id="MF_00056"/>
    </source>
</evidence>
<sequence>MTQKIIRVGNIEIANDKPFVLFGGMNVLESRDLALKVCEEYVRVTEKLGIPYVFKASFDKANRSSVNSYRGPGMEEGLKIFEEIKRTFNVPVITDVHEPYQCEPVAQVCDIIQLPAFLSRQTDLVVAMAKTGAVINIKKAQFLAPHEMKHILAKCVEAGNDQLILCERGSSFGYNNLVVDMLGFGIMKQFEYPVFFDVTHSLQTPGGRADSAGGRRAQVTDLAKAGMSQGLAGLFLEAHPDPDNAKCDGPCALRLDKLEPFLAQLKQLDDLVKSFPTVETA</sequence>
<proteinExistence type="inferred from homology"/>
<gene>
    <name evidence="1" type="primary">kdsA</name>
    <name type="ordered locus">PSEEN4201</name>
</gene>
<dbReference type="EC" id="2.5.1.55" evidence="1"/>
<dbReference type="EMBL" id="CT573326">
    <property type="protein sequence ID" value="CAK16890.1"/>
    <property type="molecule type" value="Genomic_DNA"/>
</dbReference>
<dbReference type="RefSeq" id="WP_011535261.1">
    <property type="nucleotide sequence ID" value="NC_008027.1"/>
</dbReference>
<dbReference type="SMR" id="Q1I645"/>
<dbReference type="STRING" id="384676.PSEEN4201"/>
<dbReference type="GeneID" id="32807208"/>
<dbReference type="KEGG" id="pen:PSEEN4201"/>
<dbReference type="eggNOG" id="COG2877">
    <property type="taxonomic scope" value="Bacteria"/>
</dbReference>
<dbReference type="HOGENOM" id="CLU_036666_0_0_6"/>
<dbReference type="OrthoDB" id="9776934at2"/>
<dbReference type="UniPathway" id="UPA00030"/>
<dbReference type="UniPathway" id="UPA00357">
    <property type="reaction ID" value="UER00474"/>
</dbReference>
<dbReference type="Proteomes" id="UP000000658">
    <property type="component" value="Chromosome"/>
</dbReference>
<dbReference type="GO" id="GO:0005737">
    <property type="term" value="C:cytoplasm"/>
    <property type="evidence" value="ECO:0007669"/>
    <property type="project" value="UniProtKB-SubCell"/>
</dbReference>
<dbReference type="GO" id="GO:0008676">
    <property type="term" value="F:3-deoxy-8-phosphooctulonate synthase activity"/>
    <property type="evidence" value="ECO:0007669"/>
    <property type="project" value="UniProtKB-UniRule"/>
</dbReference>
<dbReference type="GO" id="GO:0019294">
    <property type="term" value="P:keto-3-deoxy-D-manno-octulosonic acid biosynthetic process"/>
    <property type="evidence" value="ECO:0007669"/>
    <property type="project" value="UniProtKB-UniRule"/>
</dbReference>
<dbReference type="FunFam" id="3.20.20.70:FF:000058">
    <property type="entry name" value="2-dehydro-3-deoxyphosphooctonate aldolase"/>
    <property type="match status" value="1"/>
</dbReference>
<dbReference type="Gene3D" id="3.20.20.70">
    <property type="entry name" value="Aldolase class I"/>
    <property type="match status" value="1"/>
</dbReference>
<dbReference type="HAMAP" id="MF_00056">
    <property type="entry name" value="KDO8P_synth"/>
    <property type="match status" value="1"/>
</dbReference>
<dbReference type="InterPro" id="IPR013785">
    <property type="entry name" value="Aldolase_TIM"/>
</dbReference>
<dbReference type="InterPro" id="IPR006218">
    <property type="entry name" value="DAHP1/KDSA"/>
</dbReference>
<dbReference type="InterPro" id="IPR006269">
    <property type="entry name" value="KDO8P_synthase"/>
</dbReference>
<dbReference type="NCBIfam" id="TIGR01362">
    <property type="entry name" value="KDO8P_synth"/>
    <property type="match status" value="1"/>
</dbReference>
<dbReference type="NCBIfam" id="NF003543">
    <property type="entry name" value="PRK05198.1"/>
    <property type="match status" value="1"/>
</dbReference>
<dbReference type="NCBIfam" id="NF009109">
    <property type="entry name" value="PRK12457.1"/>
    <property type="match status" value="1"/>
</dbReference>
<dbReference type="PANTHER" id="PTHR21057">
    <property type="entry name" value="PHOSPHO-2-DEHYDRO-3-DEOXYHEPTONATE ALDOLASE"/>
    <property type="match status" value="1"/>
</dbReference>
<dbReference type="Pfam" id="PF00793">
    <property type="entry name" value="DAHP_synth_1"/>
    <property type="match status" value="1"/>
</dbReference>
<dbReference type="SUPFAM" id="SSF51569">
    <property type="entry name" value="Aldolase"/>
    <property type="match status" value="1"/>
</dbReference>
<organism>
    <name type="scientific">Pseudomonas entomophila (strain L48)</name>
    <dbReference type="NCBI Taxonomy" id="384676"/>
    <lineage>
        <taxon>Bacteria</taxon>
        <taxon>Pseudomonadati</taxon>
        <taxon>Pseudomonadota</taxon>
        <taxon>Gammaproteobacteria</taxon>
        <taxon>Pseudomonadales</taxon>
        <taxon>Pseudomonadaceae</taxon>
        <taxon>Pseudomonas</taxon>
    </lineage>
</organism>
<protein>
    <recommendedName>
        <fullName evidence="1">2-dehydro-3-deoxyphosphooctonate aldolase</fullName>
        <ecNumber evidence="1">2.5.1.55</ecNumber>
    </recommendedName>
    <alternativeName>
        <fullName evidence="1">3-deoxy-D-manno-octulosonic acid 8-phosphate synthase</fullName>
    </alternativeName>
    <alternativeName>
        <fullName evidence="1">KDO-8-phosphate synthase</fullName>
        <shortName evidence="1">KDO 8-P synthase</shortName>
        <shortName evidence="1">KDOPS</shortName>
    </alternativeName>
    <alternativeName>
        <fullName evidence="1">Phospho-2-dehydro-3-deoxyoctonate aldolase</fullName>
    </alternativeName>
</protein>
<feature type="chain" id="PRO_0000304471" description="2-dehydro-3-deoxyphosphooctonate aldolase">
    <location>
        <begin position="1"/>
        <end position="281"/>
    </location>
</feature>
<keyword id="KW-0963">Cytoplasm</keyword>
<keyword id="KW-0448">Lipopolysaccharide biosynthesis</keyword>
<keyword id="KW-0808">Transferase</keyword>
<comment type="catalytic activity">
    <reaction evidence="1">
        <text>D-arabinose 5-phosphate + phosphoenolpyruvate + H2O = 3-deoxy-alpha-D-manno-2-octulosonate-8-phosphate + phosphate</text>
        <dbReference type="Rhea" id="RHEA:14053"/>
        <dbReference type="ChEBI" id="CHEBI:15377"/>
        <dbReference type="ChEBI" id="CHEBI:43474"/>
        <dbReference type="ChEBI" id="CHEBI:57693"/>
        <dbReference type="ChEBI" id="CHEBI:58702"/>
        <dbReference type="ChEBI" id="CHEBI:85985"/>
        <dbReference type="EC" id="2.5.1.55"/>
    </reaction>
</comment>
<comment type="pathway">
    <text evidence="1">Carbohydrate biosynthesis; 3-deoxy-D-manno-octulosonate biosynthesis; 3-deoxy-D-manno-octulosonate from D-ribulose 5-phosphate: step 2/3.</text>
</comment>
<comment type="pathway">
    <text evidence="1">Bacterial outer membrane biogenesis; lipopolysaccharide biosynthesis.</text>
</comment>
<comment type="subcellular location">
    <subcellularLocation>
        <location evidence="1">Cytoplasm</location>
    </subcellularLocation>
</comment>
<comment type="similarity">
    <text evidence="1">Belongs to the KdsA family.</text>
</comment>
<reference key="1">
    <citation type="journal article" date="2006" name="Nat. Biotechnol.">
        <title>Complete genome sequence of the entomopathogenic and metabolically versatile soil bacterium Pseudomonas entomophila.</title>
        <authorList>
            <person name="Vodovar N."/>
            <person name="Vallenet D."/>
            <person name="Cruveiller S."/>
            <person name="Rouy Z."/>
            <person name="Barbe V."/>
            <person name="Acosta C."/>
            <person name="Cattolico L."/>
            <person name="Jubin C."/>
            <person name="Lajus A."/>
            <person name="Segurens B."/>
            <person name="Vacherie B."/>
            <person name="Wincker P."/>
            <person name="Weissenbach J."/>
            <person name="Lemaitre B."/>
            <person name="Medigue C."/>
            <person name="Boccard F."/>
        </authorList>
    </citation>
    <scope>NUCLEOTIDE SEQUENCE [LARGE SCALE GENOMIC DNA]</scope>
    <source>
        <strain>L48</strain>
    </source>
</reference>
<accession>Q1I645</accession>
<name>KDSA_PSEE4</name>